<keyword id="KW-0028">Amino-acid biosynthesis</keyword>
<keyword id="KW-0413">Isomerase</keyword>
<keyword id="KW-0486">Methionine biosynthesis</keyword>
<organism>
    <name type="scientific">Yersinia pseudotuberculosis serotype O:1b (strain IP 31758)</name>
    <dbReference type="NCBI Taxonomy" id="349747"/>
    <lineage>
        <taxon>Bacteria</taxon>
        <taxon>Pseudomonadati</taxon>
        <taxon>Pseudomonadota</taxon>
        <taxon>Gammaproteobacteria</taxon>
        <taxon>Enterobacterales</taxon>
        <taxon>Yersiniaceae</taxon>
        <taxon>Yersinia</taxon>
    </lineage>
</organism>
<feature type="chain" id="PRO_0000357282" description="Methylthioribose-1-phosphate isomerase">
    <location>
        <begin position="1"/>
        <end position="346"/>
    </location>
</feature>
<feature type="active site" description="Proton donor" evidence="1">
    <location>
        <position position="233"/>
    </location>
</feature>
<feature type="binding site" evidence="1">
    <location>
        <begin position="54"/>
        <end position="56"/>
    </location>
    <ligand>
        <name>substrate</name>
    </ligand>
</feature>
<feature type="binding site" evidence="1">
    <location>
        <position position="91"/>
    </location>
    <ligand>
        <name>substrate</name>
    </ligand>
</feature>
<feature type="binding site" evidence="1">
    <location>
        <position position="192"/>
    </location>
    <ligand>
        <name>substrate</name>
    </ligand>
</feature>
<feature type="binding site" evidence="1">
    <location>
        <begin position="243"/>
        <end position="244"/>
    </location>
    <ligand>
        <name>substrate</name>
    </ligand>
</feature>
<feature type="site" description="Transition state stabilizer" evidence="1">
    <location>
        <position position="153"/>
    </location>
</feature>
<proteinExistence type="inferred from homology"/>
<evidence type="ECO:0000255" key="1">
    <source>
        <dbReference type="HAMAP-Rule" id="MF_01678"/>
    </source>
</evidence>
<evidence type="ECO:0000305" key="2"/>
<sequence>MQTLNTLDLQTTSLKIVNGQLWILDQQALPQRQEWLLADTVASLIEHIQALRVRGAPLIGLSASLLLALLAERGLSQALLEQALIALRESRPTAVNLMNNLARMQQALLQPNWVTAMAAEALRLVDEDRELCERIAQHGAALVKPGSNLLTHCNTGGLATAGIGTAIGVLLRAHQQGNLRQVWVDETRPLLQGGRLTAWELGELGIPYQLICDSMAASLMAQGQVDAIWVGADRIAANGDVANKIGTYSLAVLAHYHRIPFYVAAPHTTHDPDCPDGAAIPIEQRAASEVTGVSGGFGHCQWAPEDAAVYNPAFDVTPAALISGWVLDSGVITPEQVAAGFFQPHR</sequence>
<accession>A7FLL1</accession>
<protein>
    <recommendedName>
        <fullName evidence="1">Methylthioribose-1-phosphate isomerase</fullName>
        <shortName evidence="1">M1Pi</shortName>
        <shortName evidence="1">MTR-1-P isomerase</shortName>
        <ecNumber evidence="1">5.3.1.23</ecNumber>
    </recommendedName>
    <alternativeName>
        <fullName evidence="1">S-methyl-5-thioribose-1-phosphate isomerase</fullName>
    </alternativeName>
</protein>
<gene>
    <name evidence="1" type="primary">mtnA</name>
    <name type="ordered locus">YpsIP31758_3179</name>
</gene>
<reference key="1">
    <citation type="journal article" date="2007" name="PLoS Genet.">
        <title>The complete genome sequence of Yersinia pseudotuberculosis IP31758, the causative agent of Far East scarlet-like fever.</title>
        <authorList>
            <person name="Eppinger M."/>
            <person name="Rosovitz M.J."/>
            <person name="Fricke W.F."/>
            <person name="Rasko D.A."/>
            <person name="Kokorina G."/>
            <person name="Fayolle C."/>
            <person name="Lindler L.E."/>
            <person name="Carniel E."/>
            <person name="Ravel J."/>
        </authorList>
    </citation>
    <scope>NUCLEOTIDE SEQUENCE [LARGE SCALE GENOMIC DNA]</scope>
    <source>
        <strain>IP 31758</strain>
    </source>
</reference>
<dbReference type="EC" id="5.3.1.23" evidence="1"/>
<dbReference type="EMBL" id="CP000720">
    <property type="protein sequence ID" value="ABS49345.1"/>
    <property type="molecule type" value="Genomic_DNA"/>
</dbReference>
<dbReference type="RefSeq" id="WP_011906391.1">
    <property type="nucleotide sequence ID" value="NC_009708.1"/>
</dbReference>
<dbReference type="SMR" id="A7FLL1"/>
<dbReference type="KEGG" id="ypi:YpsIP31758_3179"/>
<dbReference type="HOGENOM" id="CLU_016218_1_2_6"/>
<dbReference type="UniPathway" id="UPA00904">
    <property type="reaction ID" value="UER00874"/>
</dbReference>
<dbReference type="Proteomes" id="UP000002412">
    <property type="component" value="Chromosome"/>
</dbReference>
<dbReference type="GO" id="GO:0046523">
    <property type="term" value="F:S-methyl-5-thioribose-1-phosphate isomerase activity"/>
    <property type="evidence" value="ECO:0007669"/>
    <property type="project" value="UniProtKB-UniRule"/>
</dbReference>
<dbReference type="GO" id="GO:0019509">
    <property type="term" value="P:L-methionine salvage from methylthioadenosine"/>
    <property type="evidence" value="ECO:0007669"/>
    <property type="project" value="UniProtKB-UniRule"/>
</dbReference>
<dbReference type="FunFam" id="3.40.50.10470:FF:000006">
    <property type="entry name" value="Methylthioribose-1-phosphate isomerase"/>
    <property type="match status" value="1"/>
</dbReference>
<dbReference type="Gene3D" id="1.20.120.420">
    <property type="entry name" value="translation initiation factor eif-2b, domain 1"/>
    <property type="match status" value="1"/>
</dbReference>
<dbReference type="Gene3D" id="3.40.50.10470">
    <property type="entry name" value="Translation initiation factor eif-2b, domain 2"/>
    <property type="match status" value="1"/>
</dbReference>
<dbReference type="HAMAP" id="MF_01678">
    <property type="entry name" value="Salvage_MtnA"/>
    <property type="match status" value="1"/>
</dbReference>
<dbReference type="InterPro" id="IPR000649">
    <property type="entry name" value="IF-2B-related"/>
</dbReference>
<dbReference type="InterPro" id="IPR005251">
    <property type="entry name" value="IF-M1Pi"/>
</dbReference>
<dbReference type="InterPro" id="IPR042529">
    <property type="entry name" value="IF_2B-like_C"/>
</dbReference>
<dbReference type="InterPro" id="IPR011559">
    <property type="entry name" value="Initiation_fac_2B_a/b/d"/>
</dbReference>
<dbReference type="InterPro" id="IPR027363">
    <property type="entry name" value="M1Pi_N"/>
</dbReference>
<dbReference type="InterPro" id="IPR037171">
    <property type="entry name" value="NagB/RpiA_transferase-like"/>
</dbReference>
<dbReference type="NCBIfam" id="TIGR00524">
    <property type="entry name" value="eIF-2B_rel"/>
    <property type="match status" value="1"/>
</dbReference>
<dbReference type="NCBIfam" id="NF004326">
    <property type="entry name" value="PRK05720.1"/>
    <property type="match status" value="1"/>
</dbReference>
<dbReference type="NCBIfam" id="TIGR00512">
    <property type="entry name" value="salvage_mtnA"/>
    <property type="match status" value="1"/>
</dbReference>
<dbReference type="PANTHER" id="PTHR43475">
    <property type="entry name" value="METHYLTHIORIBOSE-1-PHOSPHATE ISOMERASE"/>
    <property type="match status" value="1"/>
</dbReference>
<dbReference type="PANTHER" id="PTHR43475:SF1">
    <property type="entry name" value="METHYLTHIORIBOSE-1-PHOSPHATE ISOMERASE"/>
    <property type="match status" value="1"/>
</dbReference>
<dbReference type="Pfam" id="PF01008">
    <property type="entry name" value="IF-2B"/>
    <property type="match status" value="1"/>
</dbReference>
<dbReference type="SUPFAM" id="SSF100950">
    <property type="entry name" value="NagB/RpiA/CoA transferase-like"/>
    <property type="match status" value="1"/>
</dbReference>
<comment type="function">
    <text evidence="1">Catalyzes the interconversion of methylthioribose-1-phosphate (MTR-1-P) into methylthioribulose-1-phosphate (MTRu-1-P).</text>
</comment>
<comment type="catalytic activity">
    <reaction evidence="1">
        <text>5-(methylsulfanyl)-alpha-D-ribose 1-phosphate = 5-(methylsulfanyl)-D-ribulose 1-phosphate</text>
        <dbReference type="Rhea" id="RHEA:19989"/>
        <dbReference type="ChEBI" id="CHEBI:58533"/>
        <dbReference type="ChEBI" id="CHEBI:58548"/>
        <dbReference type="EC" id="5.3.1.23"/>
    </reaction>
</comment>
<comment type="pathway">
    <text evidence="1">Amino-acid biosynthesis; L-methionine biosynthesis via salvage pathway; L-methionine from S-methyl-5-thio-alpha-D-ribose 1-phosphate: step 1/6.</text>
</comment>
<comment type="similarity">
    <text evidence="2">Belongs to the eIF-2B alpha/beta/delta subunits family. MtnA subfamily.</text>
</comment>
<name>MTNA_YERP3</name>